<sequence>MSSSPPQHDLGHCDGDDFLARYTLHSRAEILFQLRALQKRKVLVNLDLSESRQIIVTSVLAVNEADNTVVLDSARGDALNNELMSGKGAEFVAQLDGVSISFSIGAVSLCEYEKLPALRIPVPTSLIRLQRREHFRVPLPIANPVKCIVPSPWEESKEQITTHLVDIGCGGVALTDIGARLGTESGRLLRGCRLLLPETDVVVTTLEIRNSAQIRLQNGSFQTRLGCKFVDLPNDMAAHLQRFVMNIERARRNRL</sequence>
<evidence type="ECO:0000255" key="1">
    <source>
        <dbReference type="HAMAP-Rule" id="MF_01457"/>
    </source>
</evidence>
<gene>
    <name evidence="1" type="primary">ycgR</name>
    <name type="ordered locus">Tbd_1597</name>
</gene>
<organism>
    <name type="scientific">Thiobacillus denitrificans (strain ATCC 25259 / T1)</name>
    <dbReference type="NCBI Taxonomy" id="292415"/>
    <lineage>
        <taxon>Bacteria</taxon>
        <taxon>Pseudomonadati</taxon>
        <taxon>Pseudomonadota</taxon>
        <taxon>Betaproteobacteria</taxon>
        <taxon>Nitrosomonadales</taxon>
        <taxon>Thiobacillaceae</taxon>
        <taxon>Thiobacillus</taxon>
    </lineage>
</organism>
<comment type="function">
    <text evidence="1">Acts as a flagellar brake, regulating swimming and swarming in a bis-(3'-5') cyclic diguanylic acid (c-di-GMP)-dependent manner. Binds 1 c-di-GMP dimer per subunit. Increasing levels of c-di-GMP lead to decreased motility.</text>
</comment>
<comment type="subunit">
    <text evidence="1">Monomer. Interacts with the flagellar basal bodies.</text>
</comment>
<comment type="subcellular location">
    <subcellularLocation>
        <location evidence="1">Bacterial flagellum basal body</location>
    </subcellularLocation>
</comment>
<comment type="similarity">
    <text evidence="1">Belongs to the YcgR family.</text>
</comment>
<dbReference type="EMBL" id="CP000116">
    <property type="protein sequence ID" value="AAZ97550.1"/>
    <property type="molecule type" value="Genomic_DNA"/>
</dbReference>
<dbReference type="RefSeq" id="WP_011312109.1">
    <property type="nucleotide sequence ID" value="NC_007404.1"/>
</dbReference>
<dbReference type="SMR" id="Q3SIH8"/>
<dbReference type="STRING" id="292415.Tbd_1597"/>
<dbReference type="DNASU" id="3672982"/>
<dbReference type="KEGG" id="tbd:Tbd_1597"/>
<dbReference type="eggNOG" id="COG5581">
    <property type="taxonomic scope" value="Bacteria"/>
</dbReference>
<dbReference type="HOGENOM" id="CLU_086025_0_0_4"/>
<dbReference type="OrthoDB" id="5572581at2"/>
<dbReference type="Proteomes" id="UP000008291">
    <property type="component" value="Chromosome"/>
</dbReference>
<dbReference type="GO" id="GO:0009425">
    <property type="term" value="C:bacterial-type flagellum basal body"/>
    <property type="evidence" value="ECO:0007669"/>
    <property type="project" value="UniProtKB-SubCell"/>
</dbReference>
<dbReference type="GO" id="GO:0035438">
    <property type="term" value="F:cyclic-di-GMP binding"/>
    <property type="evidence" value="ECO:0007669"/>
    <property type="project" value="UniProtKB-UniRule"/>
</dbReference>
<dbReference type="GO" id="GO:0071973">
    <property type="term" value="P:bacterial-type flagellum-dependent cell motility"/>
    <property type="evidence" value="ECO:0007669"/>
    <property type="project" value="UniProtKB-UniRule"/>
</dbReference>
<dbReference type="GO" id="GO:0071945">
    <property type="term" value="P:regulation of bacterial-type flagellum-dependent cell motility by regulation of motor speed"/>
    <property type="evidence" value="ECO:0007669"/>
    <property type="project" value="UniProtKB-UniRule"/>
</dbReference>
<dbReference type="Gene3D" id="2.30.110.10">
    <property type="entry name" value="Electron Transport, Fmn-binding Protein, Chain A"/>
    <property type="match status" value="1"/>
</dbReference>
<dbReference type="Gene3D" id="2.40.10.220">
    <property type="entry name" value="predicted glycosyltransferase like domains"/>
    <property type="match status" value="1"/>
</dbReference>
<dbReference type="HAMAP" id="MF_01457">
    <property type="entry name" value="YcgR"/>
    <property type="match status" value="1"/>
</dbReference>
<dbReference type="InterPro" id="IPR009875">
    <property type="entry name" value="PilZ_domain"/>
</dbReference>
<dbReference type="InterPro" id="IPR012349">
    <property type="entry name" value="Split_barrel_FMN-bd"/>
</dbReference>
<dbReference type="InterPro" id="IPR023787">
    <property type="entry name" value="T3SS_YcgR"/>
</dbReference>
<dbReference type="InterPro" id="IPR009926">
    <property type="entry name" value="T3SS_YcgR_PilZN"/>
</dbReference>
<dbReference type="Pfam" id="PF07238">
    <property type="entry name" value="PilZ"/>
    <property type="match status" value="1"/>
</dbReference>
<dbReference type="Pfam" id="PF07317">
    <property type="entry name" value="PilZN"/>
    <property type="match status" value="1"/>
</dbReference>
<reference key="1">
    <citation type="journal article" date="2006" name="J. Bacteriol.">
        <title>The genome sequence of the obligately chemolithoautotrophic, facultatively anaerobic bacterium Thiobacillus denitrificans.</title>
        <authorList>
            <person name="Beller H.R."/>
            <person name="Chain P.S."/>
            <person name="Letain T.E."/>
            <person name="Chakicherla A."/>
            <person name="Larimer F.W."/>
            <person name="Richardson P.M."/>
            <person name="Coleman M.A."/>
            <person name="Wood A.P."/>
            <person name="Kelly D.P."/>
        </authorList>
    </citation>
    <scope>NUCLEOTIDE SEQUENCE [LARGE SCALE GENOMIC DNA]</scope>
    <source>
        <strain>ATCC 25259 / T1</strain>
    </source>
</reference>
<protein>
    <recommendedName>
        <fullName evidence="1">Flagellar brake protein YcgR</fullName>
    </recommendedName>
    <alternativeName>
        <fullName evidence="1">Cyclic di-GMP binding protein YcgR</fullName>
    </alternativeName>
</protein>
<proteinExistence type="inferred from homology"/>
<accession>Q3SIH8</accession>
<keyword id="KW-0975">Bacterial flagellum</keyword>
<keyword id="KW-0973">c-di-GMP</keyword>
<keyword id="KW-0547">Nucleotide-binding</keyword>
<keyword id="KW-1185">Reference proteome</keyword>
<feature type="chain" id="PRO_0000395288" description="Flagellar brake protein YcgR">
    <location>
        <begin position="1"/>
        <end position="255"/>
    </location>
</feature>
<feature type="domain" description="PilZ" evidence="1">
    <location>
        <begin position="130"/>
        <end position="245"/>
    </location>
</feature>
<name>YCGR_THIDA</name>